<accession>A4IRU5</accession>
<protein>
    <recommendedName>
        <fullName evidence="1">Small ribosomal subunit protein uS4</fullName>
    </recommendedName>
    <alternativeName>
        <fullName evidence="3">30S ribosomal protein S4</fullName>
    </alternativeName>
</protein>
<name>RS4_GEOTN</name>
<gene>
    <name evidence="1" type="primary">rpsD</name>
    <name type="ordered locus">GTNG_2704</name>
</gene>
<sequence length="200" mass="23146">MARYTGPTWKISRRLGISLSGTGKELQKRPYPPGQHGPGQRRKLSEYGLQLQEKQKLRHMYGVNERQFRKTFDEAGKMPGKHGENFMILLESRLDNLVYRLGLARTRRQARQLVTHGHILVDGSRVNIPSYRVKPGQTIAVREKSRNLQVIKEAIEVNNFVPDYLTFDPEKLEGTYTRLPERSELPAEINEALIVEFYSR</sequence>
<dbReference type="EMBL" id="CP000557">
    <property type="protein sequence ID" value="ABO68049.1"/>
    <property type="molecule type" value="Genomic_DNA"/>
</dbReference>
<dbReference type="RefSeq" id="WP_008880902.1">
    <property type="nucleotide sequence ID" value="NC_009328.1"/>
</dbReference>
<dbReference type="SMR" id="A4IRU5"/>
<dbReference type="GeneID" id="87623155"/>
<dbReference type="KEGG" id="gtn:GTNG_2704"/>
<dbReference type="eggNOG" id="COG0522">
    <property type="taxonomic scope" value="Bacteria"/>
</dbReference>
<dbReference type="HOGENOM" id="CLU_092403_0_1_9"/>
<dbReference type="Proteomes" id="UP000001578">
    <property type="component" value="Chromosome"/>
</dbReference>
<dbReference type="GO" id="GO:0015935">
    <property type="term" value="C:small ribosomal subunit"/>
    <property type="evidence" value="ECO:0007669"/>
    <property type="project" value="InterPro"/>
</dbReference>
<dbReference type="GO" id="GO:0019843">
    <property type="term" value="F:rRNA binding"/>
    <property type="evidence" value="ECO:0007669"/>
    <property type="project" value="UniProtKB-UniRule"/>
</dbReference>
<dbReference type="GO" id="GO:0003735">
    <property type="term" value="F:structural constituent of ribosome"/>
    <property type="evidence" value="ECO:0007669"/>
    <property type="project" value="InterPro"/>
</dbReference>
<dbReference type="GO" id="GO:0042274">
    <property type="term" value="P:ribosomal small subunit biogenesis"/>
    <property type="evidence" value="ECO:0007669"/>
    <property type="project" value="TreeGrafter"/>
</dbReference>
<dbReference type="GO" id="GO:0006412">
    <property type="term" value="P:translation"/>
    <property type="evidence" value="ECO:0007669"/>
    <property type="project" value="UniProtKB-UniRule"/>
</dbReference>
<dbReference type="CDD" id="cd00165">
    <property type="entry name" value="S4"/>
    <property type="match status" value="1"/>
</dbReference>
<dbReference type="FunFam" id="1.10.1050.10:FF:000001">
    <property type="entry name" value="30S ribosomal protein S4"/>
    <property type="match status" value="1"/>
</dbReference>
<dbReference type="FunFam" id="3.10.290.10:FF:000001">
    <property type="entry name" value="30S ribosomal protein S4"/>
    <property type="match status" value="1"/>
</dbReference>
<dbReference type="Gene3D" id="1.10.1050.10">
    <property type="entry name" value="Ribosomal Protein S4 Delta 41, Chain A, domain 1"/>
    <property type="match status" value="1"/>
</dbReference>
<dbReference type="Gene3D" id="3.10.290.10">
    <property type="entry name" value="RNA-binding S4 domain"/>
    <property type="match status" value="1"/>
</dbReference>
<dbReference type="HAMAP" id="MF_01306_B">
    <property type="entry name" value="Ribosomal_uS4_B"/>
    <property type="match status" value="1"/>
</dbReference>
<dbReference type="InterPro" id="IPR022801">
    <property type="entry name" value="Ribosomal_uS4"/>
</dbReference>
<dbReference type="InterPro" id="IPR005709">
    <property type="entry name" value="Ribosomal_uS4_bac-type"/>
</dbReference>
<dbReference type="InterPro" id="IPR018079">
    <property type="entry name" value="Ribosomal_uS4_CS"/>
</dbReference>
<dbReference type="InterPro" id="IPR001912">
    <property type="entry name" value="Ribosomal_uS4_N"/>
</dbReference>
<dbReference type="InterPro" id="IPR002942">
    <property type="entry name" value="S4_RNA-bd"/>
</dbReference>
<dbReference type="InterPro" id="IPR036986">
    <property type="entry name" value="S4_RNA-bd_sf"/>
</dbReference>
<dbReference type="NCBIfam" id="NF003717">
    <property type="entry name" value="PRK05327.1"/>
    <property type="match status" value="1"/>
</dbReference>
<dbReference type="NCBIfam" id="TIGR01017">
    <property type="entry name" value="rpsD_bact"/>
    <property type="match status" value="1"/>
</dbReference>
<dbReference type="PANTHER" id="PTHR11831">
    <property type="entry name" value="30S 40S RIBOSOMAL PROTEIN"/>
    <property type="match status" value="1"/>
</dbReference>
<dbReference type="PANTHER" id="PTHR11831:SF4">
    <property type="entry name" value="SMALL RIBOSOMAL SUBUNIT PROTEIN US4M"/>
    <property type="match status" value="1"/>
</dbReference>
<dbReference type="Pfam" id="PF00163">
    <property type="entry name" value="Ribosomal_S4"/>
    <property type="match status" value="1"/>
</dbReference>
<dbReference type="Pfam" id="PF01479">
    <property type="entry name" value="S4"/>
    <property type="match status" value="1"/>
</dbReference>
<dbReference type="SMART" id="SM01390">
    <property type="entry name" value="Ribosomal_S4"/>
    <property type="match status" value="1"/>
</dbReference>
<dbReference type="SMART" id="SM00363">
    <property type="entry name" value="S4"/>
    <property type="match status" value="1"/>
</dbReference>
<dbReference type="SUPFAM" id="SSF55174">
    <property type="entry name" value="Alpha-L RNA-binding motif"/>
    <property type="match status" value="1"/>
</dbReference>
<dbReference type="PROSITE" id="PS00632">
    <property type="entry name" value="RIBOSOMAL_S4"/>
    <property type="match status" value="1"/>
</dbReference>
<dbReference type="PROSITE" id="PS50889">
    <property type="entry name" value="S4"/>
    <property type="match status" value="1"/>
</dbReference>
<reference key="1">
    <citation type="journal article" date="2007" name="Proc. Natl. Acad. Sci. U.S.A.">
        <title>Genome and proteome of long-chain alkane degrading Geobacillus thermodenitrificans NG80-2 isolated from a deep-subsurface oil reservoir.</title>
        <authorList>
            <person name="Feng L."/>
            <person name="Wang W."/>
            <person name="Cheng J."/>
            <person name="Ren Y."/>
            <person name="Zhao G."/>
            <person name="Gao C."/>
            <person name="Tang Y."/>
            <person name="Liu X."/>
            <person name="Han W."/>
            <person name="Peng X."/>
            <person name="Liu R."/>
            <person name="Wang L."/>
        </authorList>
    </citation>
    <scope>NUCLEOTIDE SEQUENCE [LARGE SCALE GENOMIC DNA]</scope>
    <source>
        <strain>NG80-2</strain>
    </source>
</reference>
<proteinExistence type="inferred from homology"/>
<feature type="chain" id="PRO_0000322302" description="Small ribosomal subunit protein uS4">
    <location>
        <begin position="1"/>
        <end position="200"/>
    </location>
</feature>
<feature type="domain" description="S4 RNA-binding" evidence="1">
    <location>
        <begin position="92"/>
        <end position="155"/>
    </location>
</feature>
<feature type="region of interest" description="Disordered" evidence="2">
    <location>
        <begin position="21"/>
        <end position="42"/>
    </location>
</feature>
<comment type="function">
    <text evidence="1">One of the primary rRNA binding proteins, it binds directly to 16S rRNA where it nucleates assembly of the body of the 30S subunit.</text>
</comment>
<comment type="function">
    <text evidence="1">With S5 and S12 plays an important role in translational accuracy.</text>
</comment>
<comment type="subunit">
    <text evidence="1">Part of the 30S ribosomal subunit. Contacts protein S5. The interaction surface between S4 and S5 is involved in control of translational fidelity.</text>
</comment>
<comment type="similarity">
    <text evidence="1">Belongs to the universal ribosomal protein uS4 family.</text>
</comment>
<keyword id="KW-0687">Ribonucleoprotein</keyword>
<keyword id="KW-0689">Ribosomal protein</keyword>
<keyword id="KW-0694">RNA-binding</keyword>
<keyword id="KW-0699">rRNA-binding</keyword>
<evidence type="ECO:0000255" key="1">
    <source>
        <dbReference type="HAMAP-Rule" id="MF_01306"/>
    </source>
</evidence>
<evidence type="ECO:0000256" key="2">
    <source>
        <dbReference type="SAM" id="MobiDB-lite"/>
    </source>
</evidence>
<evidence type="ECO:0000305" key="3"/>
<organism>
    <name type="scientific">Geobacillus thermodenitrificans (strain NG80-2)</name>
    <dbReference type="NCBI Taxonomy" id="420246"/>
    <lineage>
        <taxon>Bacteria</taxon>
        <taxon>Bacillati</taxon>
        <taxon>Bacillota</taxon>
        <taxon>Bacilli</taxon>
        <taxon>Bacillales</taxon>
        <taxon>Anoxybacillaceae</taxon>
        <taxon>Geobacillus</taxon>
    </lineage>
</organism>